<reference key="1">
    <citation type="journal article" date="2011" name="MBio">
        <title>Novel metabolic attributes of the genus Cyanothece, comprising a group of unicellular nitrogen-fixing Cyanobacteria.</title>
        <authorList>
            <person name="Bandyopadhyay A."/>
            <person name="Elvitigala T."/>
            <person name="Welsh E."/>
            <person name="Stockel J."/>
            <person name="Liberton M."/>
            <person name="Min H."/>
            <person name="Sherman L.A."/>
            <person name="Pakrasi H.B."/>
        </authorList>
    </citation>
    <scope>NUCLEOTIDE SEQUENCE [LARGE SCALE GENOMIC DNA]</scope>
    <source>
        <strain>PCC 7424</strain>
    </source>
</reference>
<comment type="function">
    <text evidence="1">May help in the organization of the PsaL subunit.</text>
</comment>
<comment type="subcellular location">
    <subcellularLocation>
        <location evidence="1">Cellular thylakoid membrane</location>
        <topology evidence="1">Single-pass membrane protein</topology>
    </subcellularLocation>
</comment>
<comment type="similarity">
    <text evidence="1">Belongs to the PsaI family.</text>
</comment>
<organism>
    <name type="scientific">Gloeothece citriformis (strain PCC 7424)</name>
    <name type="common">Cyanothece sp. (strain PCC 7424)</name>
    <dbReference type="NCBI Taxonomy" id="65393"/>
    <lineage>
        <taxon>Bacteria</taxon>
        <taxon>Bacillati</taxon>
        <taxon>Cyanobacteriota</taxon>
        <taxon>Cyanophyceae</taxon>
        <taxon>Oscillatoriophycideae</taxon>
        <taxon>Chroococcales</taxon>
        <taxon>Aphanothecaceae</taxon>
        <taxon>Gloeothece</taxon>
        <taxon>Gloeothece citriformis</taxon>
    </lineage>
</organism>
<name>PSAI_GLOC7</name>
<gene>
    <name evidence="1" type="primary">psaI</name>
    <name type="ordered locus">PCC7424_4473</name>
</gene>
<keyword id="KW-0472">Membrane</keyword>
<keyword id="KW-0602">Photosynthesis</keyword>
<keyword id="KW-0603">Photosystem I</keyword>
<keyword id="KW-1185">Reference proteome</keyword>
<keyword id="KW-0793">Thylakoid</keyword>
<keyword id="KW-0812">Transmembrane</keyword>
<keyword id="KW-1133">Transmembrane helix</keyword>
<accession>B7K968</accession>
<proteinExistence type="inferred from homology"/>
<evidence type="ECO:0000255" key="1">
    <source>
        <dbReference type="HAMAP-Rule" id="MF_00431"/>
    </source>
</evidence>
<sequence length="38" mass="4201">MTGAYAASYLPWILIPIIGWLMPAVVMGLLFLYIESDA</sequence>
<dbReference type="EMBL" id="CP001291">
    <property type="protein sequence ID" value="ACK72837.1"/>
    <property type="molecule type" value="Genomic_DNA"/>
</dbReference>
<dbReference type="RefSeq" id="WP_015956421.1">
    <property type="nucleotide sequence ID" value="NC_011729.1"/>
</dbReference>
<dbReference type="SMR" id="B7K968"/>
<dbReference type="STRING" id="65393.PCC7424_4473"/>
<dbReference type="KEGG" id="cyc:PCC7424_4473"/>
<dbReference type="eggNOG" id="ENOG5033AVJ">
    <property type="taxonomic scope" value="Bacteria"/>
</dbReference>
<dbReference type="HOGENOM" id="CLU_215282_0_0_3"/>
<dbReference type="Proteomes" id="UP000002384">
    <property type="component" value="Chromosome"/>
</dbReference>
<dbReference type="GO" id="GO:0009522">
    <property type="term" value="C:photosystem I"/>
    <property type="evidence" value="ECO:0007669"/>
    <property type="project" value="UniProtKB-KW"/>
</dbReference>
<dbReference type="GO" id="GO:0031676">
    <property type="term" value="C:plasma membrane-derived thylakoid membrane"/>
    <property type="evidence" value="ECO:0007669"/>
    <property type="project" value="UniProtKB-SubCell"/>
</dbReference>
<dbReference type="GO" id="GO:0015979">
    <property type="term" value="P:photosynthesis"/>
    <property type="evidence" value="ECO:0007669"/>
    <property type="project" value="UniProtKB-UniRule"/>
</dbReference>
<dbReference type="HAMAP" id="MF_00431">
    <property type="entry name" value="PSI_PsaI"/>
    <property type="match status" value="1"/>
</dbReference>
<dbReference type="InterPro" id="IPR001302">
    <property type="entry name" value="PSI_PsaI"/>
</dbReference>
<dbReference type="InterPro" id="IPR036357">
    <property type="entry name" value="PSI_PsaI_sf"/>
</dbReference>
<dbReference type="NCBIfam" id="NF008830">
    <property type="entry name" value="PRK11877.1"/>
    <property type="match status" value="1"/>
</dbReference>
<dbReference type="NCBIfam" id="TIGR03052">
    <property type="entry name" value="PS_I_psaI"/>
    <property type="match status" value="1"/>
</dbReference>
<dbReference type="Pfam" id="PF00796">
    <property type="entry name" value="PSI_8"/>
    <property type="match status" value="1"/>
</dbReference>
<dbReference type="SUPFAM" id="SSF81540">
    <property type="entry name" value="Subunit VIII of photosystem I reaction centre, PsaI"/>
    <property type="match status" value="1"/>
</dbReference>
<protein>
    <recommendedName>
        <fullName evidence="1">Photosystem I reaction center subunit VIII</fullName>
    </recommendedName>
</protein>
<feature type="chain" id="PRO_1000192864" description="Photosystem I reaction center subunit VIII">
    <location>
        <begin position="1"/>
        <end position="38"/>
    </location>
</feature>
<feature type="transmembrane region" description="Helical" evidence="1">
    <location>
        <begin position="12"/>
        <end position="32"/>
    </location>
</feature>